<feature type="signal peptide" evidence="2">
    <location>
        <begin position="1"/>
        <end position="17"/>
    </location>
</feature>
<feature type="chain" id="PRO_0000223359" description="Nucleotide exchange factor SIL1">
    <location>
        <begin position="18"/>
        <end position="383"/>
    </location>
</feature>
<feature type="short sequence motif" description="Prevents secretion from ER" evidence="2">
    <location>
        <begin position="380"/>
        <end position="383"/>
    </location>
</feature>
<protein>
    <recommendedName>
        <fullName>Nucleotide exchange factor SIL1</fullName>
    </recommendedName>
</protein>
<evidence type="ECO:0000250" key="1"/>
<evidence type="ECO:0000255" key="2"/>
<evidence type="ECO:0000305" key="3"/>
<accession>Q758U2</accession>
<keyword id="KW-0256">Endoplasmic reticulum</keyword>
<keyword id="KW-0653">Protein transport</keyword>
<keyword id="KW-1185">Reference proteome</keyword>
<keyword id="KW-0732">Signal</keyword>
<keyword id="KW-0811">Translocation</keyword>
<keyword id="KW-0813">Transport</keyword>
<name>SIL1_EREGS</name>
<organism>
    <name type="scientific">Eremothecium gossypii (strain ATCC 10895 / CBS 109.51 / FGSC 9923 / NRRL Y-1056)</name>
    <name type="common">Yeast</name>
    <name type="synonym">Ashbya gossypii</name>
    <dbReference type="NCBI Taxonomy" id="284811"/>
    <lineage>
        <taxon>Eukaryota</taxon>
        <taxon>Fungi</taxon>
        <taxon>Dikarya</taxon>
        <taxon>Ascomycota</taxon>
        <taxon>Saccharomycotina</taxon>
        <taxon>Saccharomycetes</taxon>
        <taxon>Saccharomycetales</taxon>
        <taxon>Saccharomycetaceae</taxon>
        <taxon>Eremothecium</taxon>
    </lineage>
</organism>
<reference key="1">
    <citation type="journal article" date="2004" name="Science">
        <title>The Ashbya gossypii genome as a tool for mapping the ancient Saccharomyces cerevisiae genome.</title>
        <authorList>
            <person name="Dietrich F.S."/>
            <person name="Voegeli S."/>
            <person name="Brachat S."/>
            <person name="Lerch A."/>
            <person name="Gates K."/>
            <person name="Steiner S."/>
            <person name="Mohr C."/>
            <person name="Poehlmann R."/>
            <person name="Luedi P."/>
            <person name="Choi S."/>
            <person name="Wing R.A."/>
            <person name="Flavier A."/>
            <person name="Gaffney T.D."/>
            <person name="Philippsen P."/>
        </authorList>
    </citation>
    <scope>NUCLEOTIDE SEQUENCE [LARGE SCALE GENOMIC DNA]</scope>
    <source>
        <strain>ATCC 10895 / CBS 109.51 / FGSC 9923 / NRRL Y-1056</strain>
    </source>
</reference>
<reference key="2">
    <citation type="journal article" date="2013" name="G3 (Bethesda)">
        <title>Genomes of Ashbya fungi isolated from insects reveal four mating-type loci, numerous translocations, lack of transposons, and distinct gene duplications.</title>
        <authorList>
            <person name="Dietrich F.S."/>
            <person name="Voegeli S."/>
            <person name="Kuo S."/>
            <person name="Philippsen P."/>
        </authorList>
    </citation>
    <scope>GENOME REANNOTATION</scope>
    <source>
        <strain>ATCC 10895 / CBS 109.51 / FGSC 9923 / NRRL Y-1056</strain>
    </source>
</reference>
<sequence>MYWKKLLFAIASAAALAAVDPETEGSELQTICSGGECYPRLFKALQDWSTIKEGQQIPPGLDIRVDLSTGKKQARLPIPNEASNMENGIQVVDDSSDYEFTKEFQLVRAQVASGAPDYNVVIKQLDDLVEYASDYTLGYKIITHEFTLLQELIFGQDVPISVKELSSRIIVACLRNNTPCLDFVNTRFPDFVRHLLQEAVDYGRQATDAVEARTQIKRYLSIVEPLLINEPQPINEEALKQLYEVNDQTVQLKVLLIMARLYKGRSHNDDISKRSLESTDVQRWTTELSKAIQSKHLDDFHVRELFHGLYALKKEHGRAVKTYPTFLGWLAEETEARKQRMTQDKQPRDLEQMEFDRLLIESRHMVFGNPMAHRIKNMEYDEL</sequence>
<dbReference type="EMBL" id="AE016818">
    <property type="protein sequence ID" value="AAS52344.1"/>
    <property type="molecule type" value="Genomic_DNA"/>
</dbReference>
<dbReference type="RefSeq" id="NP_984520.1">
    <property type="nucleotide sequence ID" value="NM_209873.1"/>
</dbReference>
<dbReference type="SMR" id="Q758U2"/>
<dbReference type="FunCoup" id="Q758U2">
    <property type="interactions" value="192"/>
</dbReference>
<dbReference type="STRING" id="284811.Q758U2"/>
<dbReference type="EnsemblFungi" id="AAS52344">
    <property type="protein sequence ID" value="AAS52344"/>
    <property type="gene ID" value="AGOS_AEL340W"/>
</dbReference>
<dbReference type="GeneID" id="4620690"/>
<dbReference type="KEGG" id="ago:AGOS_AEL340W"/>
<dbReference type="eggNOG" id="KOG2160">
    <property type="taxonomic scope" value="Eukaryota"/>
</dbReference>
<dbReference type="HOGENOM" id="CLU_034955_0_0_1"/>
<dbReference type="InParanoid" id="Q758U2"/>
<dbReference type="OMA" id="GLDIRMN"/>
<dbReference type="OrthoDB" id="448649at2759"/>
<dbReference type="Proteomes" id="UP000000591">
    <property type="component" value="Chromosome V"/>
</dbReference>
<dbReference type="GO" id="GO:0005783">
    <property type="term" value="C:endoplasmic reticulum"/>
    <property type="evidence" value="ECO:0000318"/>
    <property type="project" value="GO_Central"/>
</dbReference>
<dbReference type="GO" id="GO:0005788">
    <property type="term" value="C:endoplasmic reticulum lumen"/>
    <property type="evidence" value="ECO:0007669"/>
    <property type="project" value="UniProtKB-SubCell"/>
</dbReference>
<dbReference type="GO" id="GO:0000774">
    <property type="term" value="F:adenyl-nucleotide exchange factor activity"/>
    <property type="evidence" value="ECO:0000318"/>
    <property type="project" value="GO_Central"/>
</dbReference>
<dbReference type="GO" id="GO:0006616">
    <property type="term" value="P:SRP-dependent cotranslational protein targeting to membrane, translocation"/>
    <property type="evidence" value="ECO:0007669"/>
    <property type="project" value="EnsemblFungi"/>
</dbReference>
<dbReference type="Gene3D" id="1.25.10.10">
    <property type="entry name" value="Leucine-rich Repeat Variant"/>
    <property type="match status" value="1"/>
</dbReference>
<dbReference type="InterPro" id="IPR011989">
    <property type="entry name" value="ARM-like"/>
</dbReference>
<dbReference type="InterPro" id="IPR031884">
    <property type="entry name" value="Sil1_fungi"/>
</dbReference>
<dbReference type="Pfam" id="PF16782">
    <property type="entry name" value="SIL1"/>
    <property type="match status" value="1"/>
</dbReference>
<proteinExistence type="inferred from homology"/>
<comment type="function">
    <text evidence="1">Required for protein translocation and folding in the endoplasmic reticulum (ER). Functions as a nucleotide exchange factor for the ER lumenal chaperone KAR2 (By similarity).</text>
</comment>
<comment type="subunit">
    <text evidence="1">Interacts with KAR2.</text>
</comment>
<comment type="subcellular location">
    <subcellularLocation>
        <location evidence="1">Endoplasmic reticulum lumen</location>
    </subcellularLocation>
</comment>
<comment type="similarity">
    <text evidence="3">Belongs to the SIL1 family.</text>
</comment>
<gene>
    <name type="primary">SIL1</name>
    <name type="ordered locus">AEL340W</name>
</gene>